<keyword id="KW-0012">Acyltransferase</keyword>
<keyword id="KW-1185">Reference proteome</keyword>
<keyword id="KW-0677">Repeat</keyword>
<keyword id="KW-0808">Transferase</keyword>
<name>MSHD_CORJK</name>
<comment type="function">
    <text evidence="1">Catalyzes the transfer of acetyl from acetyl-CoA to desacetylmycothiol (Cys-GlcN-Ins) to form mycothiol.</text>
</comment>
<comment type="catalytic activity">
    <reaction evidence="1">
        <text>1D-myo-inositol 2-(L-cysteinylamino)-2-deoxy-alpha-D-glucopyranoside + acetyl-CoA = mycothiol + CoA + H(+)</text>
        <dbReference type="Rhea" id="RHEA:26172"/>
        <dbReference type="ChEBI" id="CHEBI:15378"/>
        <dbReference type="ChEBI" id="CHEBI:16768"/>
        <dbReference type="ChEBI" id="CHEBI:57287"/>
        <dbReference type="ChEBI" id="CHEBI:57288"/>
        <dbReference type="ChEBI" id="CHEBI:58887"/>
        <dbReference type="EC" id="2.3.1.189"/>
    </reaction>
</comment>
<comment type="subunit">
    <text evidence="1">Monomer.</text>
</comment>
<comment type="similarity">
    <text evidence="1">Belongs to the acetyltransferase family. MshD subfamily.</text>
</comment>
<feature type="chain" id="PRO_0000400252" description="Mycothiol acetyltransferase">
    <location>
        <begin position="1"/>
        <end position="345"/>
    </location>
</feature>
<feature type="domain" description="N-acetyltransferase 1" evidence="1">
    <location>
        <begin position="6"/>
        <end position="149"/>
    </location>
</feature>
<feature type="domain" description="N-acetyltransferase 2" evidence="1">
    <location>
        <begin position="164"/>
        <end position="345"/>
    </location>
</feature>
<feature type="binding site" evidence="1">
    <location>
        <position position="39"/>
    </location>
    <ligand>
        <name>1D-myo-inositol 2-(L-cysteinylamino)-2-deoxy-alpha-D-glucopyranoside</name>
        <dbReference type="ChEBI" id="CHEBI:58887"/>
    </ligand>
</feature>
<feature type="binding site" evidence="1">
    <location>
        <begin position="76"/>
        <end position="78"/>
    </location>
    <ligand>
        <name>acetyl-CoA</name>
        <dbReference type="ChEBI" id="CHEBI:57288"/>
        <label>1</label>
    </ligand>
</feature>
<feature type="binding site" evidence="1">
    <location>
        <position position="198"/>
    </location>
    <ligand>
        <name>1D-myo-inositol 2-(L-cysteinylamino)-2-deoxy-alpha-D-glucopyranoside</name>
        <dbReference type="ChEBI" id="CHEBI:58887"/>
    </ligand>
</feature>
<feature type="binding site" evidence="1">
    <location>
        <position position="261"/>
    </location>
    <ligand>
        <name>1D-myo-inositol 2-(L-cysteinylamino)-2-deoxy-alpha-D-glucopyranoside</name>
        <dbReference type="ChEBI" id="CHEBI:58887"/>
    </ligand>
</feature>
<feature type="binding site" evidence="1">
    <location>
        <position position="277"/>
    </location>
    <ligand>
        <name>1D-myo-inositol 2-(L-cysteinylamino)-2-deoxy-alpha-D-glucopyranoside</name>
        <dbReference type="ChEBI" id="CHEBI:58887"/>
    </ligand>
</feature>
<feature type="binding site" evidence="1">
    <location>
        <begin position="281"/>
        <end position="283"/>
    </location>
    <ligand>
        <name>acetyl-CoA</name>
        <dbReference type="ChEBI" id="CHEBI:57288"/>
        <label>2</label>
    </ligand>
</feature>
<feature type="binding site" evidence="1">
    <location>
        <begin position="288"/>
        <end position="294"/>
    </location>
    <ligand>
        <name>acetyl-CoA</name>
        <dbReference type="ChEBI" id="CHEBI:57288"/>
        <label>2</label>
    </ligand>
</feature>
<feature type="binding site" evidence="1">
    <location>
        <position position="315"/>
    </location>
    <ligand>
        <name>1D-myo-inositol 2-(L-cysteinylamino)-2-deoxy-alpha-D-glucopyranoside</name>
        <dbReference type="ChEBI" id="CHEBI:58887"/>
    </ligand>
</feature>
<sequence>MAITYDTYEDLWEHSEVLEGVHEVLSEVAEVDGVPAISEAFLRGIDEDRGHKHVVAMNGDRVAGVLAIDPDRVIELAVAPEVRHSRVGIALFEALRDQLGVSGGIDVWAHGDSAGAQRFVESLDARRTRELLKMSVDCPPATKAAKAMEAGGAEAEKRCAEQDFEVLSYTESVARFDADSVDAEWVRINNEAFAWHPEQGGWDVDYLRSARDTNWFDPDGVLMLWVRDENSAAERVGIPCAANGGEGNDDVFRLVGFHWTKIPLEEKEKDAGERTGEVYVVCLADDARGRGLGQAITQLGMKSLLENGCGRIELYVEGDNAPAVSTYKRLGFEVVHTDVVYRGRL</sequence>
<proteinExistence type="inferred from homology"/>
<evidence type="ECO:0000255" key="1">
    <source>
        <dbReference type="HAMAP-Rule" id="MF_01698"/>
    </source>
</evidence>
<dbReference type="EC" id="2.3.1.189" evidence="1"/>
<dbReference type="EMBL" id="CR931997">
    <property type="protein sequence ID" value="CAI36528.1"/>
    <property type="molecule type" value="Genomic_DNA"/>
</dbReference>
<dbReference type="RefSeq" id="WP_011273078.1">
    <property type="nucleotide sequence ID" value="NC_007164.1"/>
</dbReference>
<dbReference type="SMR" id="Q4JXC9"/>
<dbReference type="STRING" id="306537.jk0376"/>
<dbReference type="KEGG" id="cjk:jk0376"/>
<dbReference type="PATRIC" id="fig|306537.10.peg.388"/>
<dbReference type="eggNOG" id="COG0456">
    <property type="taxonomic scope" value="Bacteria"/>
</dbReference>
<dbReference type="HOGENOM" id="CLU_068014_0_0_11"/>
<dbReference type="OrthoDB" id="3208058at2"/>
<dbReference type="Proteomes" id="UP000000545">
    <property type="component" value="Chromosome"/>
</dbReference>
<dbReference type="GO" id="GO:0035447">
    <property type="term" value="F:mycothiol synthase activity"/>
    <property type="evidence" value="ECO:0007669"/>
    <property type="project" value="UniProtKB-UniRule"/>
</dbReference>
<dbReference type="GO" id="GO:0008999">
    <property type="term" value="F:protein-N-terminal-alanine acetyltransferase activity"/>
    <property type="evidence" value="ECO:0007669"/>
    <property type="project" value="TreeGrafter"/>
</dbReference>
<dbReference type="GO" id="GO:0010125">
    <property type="term" value="P:mycothiol biosynthetic process"/>
    <property type="evidence" value="ECO:0007669"/>
    <property type="project" value="UniProtKB-UniRule"/>
</dbReference>
<dbReference type="CDD" id="cd04301">
    <property type="entry name" value="NAT_SF"/>
    <property type="match status" value="1"/>
</dbReference>
<dbReference type="Gene3D" id="3.40.630.30">
    <property type="match status" value="1"/>
</dbReference>
<dbReference type="HAMAP" id="MF_01698">
    <property type="entry name" value="MshD"/>
    <property type="match status" value="1"/>
</dbReference>
<dbReference type="InterPro" id="IPR016181">
    <property type="entry name" value="Acyl_CoA_acyltransferase"/>
</dbReference>
<dbReference type="InterPro" id="IPR000182">
    <property type="entry name" value="GNAT_dom"/>
</dbReference>
<dbReference type="InterPro" id="IPR050276">
    <property type="entry name" value="MshD_Acetyltransferase"/>
</dbReference>
<dbReference type="InterPro" id="IPR017813">
    <property type="entry name" value="Mycothiol_AcTrfase"/>
</dbReference>
<dbReference type="NCBIfam" id="TIGR03448">
    <property type="entry name" value="mycothiol_MshD"/>
    <property type="match status" value="1"/>
</dbReference>
<dbReference type="PANTHER" id="PTHR43617">
    <property type="entry name" value="L-AMINO ACID N-ACETYLTRANSFERASE"/>
    <property type="match status" value="1"/>
</dbReference>
<dbReference type="PANTHER" id="PTHR43617:SF31">
    <property type="entry name" value="MYCOTHIOL ACETYLTRANSFERASE"/>
    <property type="match status" value="1"/>
</dbReference>
<dbReference type="Pfam" id="PF00583">
    <property type="entry name" value="Acetyltransf_1"/>
    <property type="match status" value="1"/>
</dbReference>
<dbReference type="PIRSF" id="PIRSF021524">
    <property type="entry name" value="MSH_acetyltransferase"/>
    <property type="match status" value="1"/>
</dbReference>
<dbReference type="SUPFAM" id="SSF55729">
    <property type="entry name" value="Acyl-CoA N-acyltransferases (Nat)"/>
    <property type="match status" value="2"/>
</dbReference>
<dbReference type="PROSITE" id="PS51186">
    <property type="entry name" value="GNAT"/>
    <property type="match status" value="2"/>
</dbReference>
<reference key="1">
    <citation type="journal article" date="2005" name="J. Bacteriol.">
        <title>Complete genome sequence and analysis of the multiresistant nosocomial pathogen Corynebacterium jeikeium K411, a lipid-requiring bacterium of the human skin flora.</title>
        <authorList>
            <person name="Tauch A."/>
            <person name="Kaiser O."/>
            <person name="Hain T."/>
            <person name="Goesmann A."/>
            <person name="Weisshaar B."/>
            <person name="Albersmeier A."/>
            <person name="Bekel T."/>
            <person name="Bischoff N."/>
            <person name="Brune I."/>
            <person name="Chakraborty T."/>
            <person name="Kalinowski J."/>
            <person name="Meyer F."/>
            <person name="Rupp O."/>
            <person name="Schneiker S."/>
            <person name="Viehoever P."/>
            <person name="Puehler A."/>
        </authorList>
    </citation>
    <scope>NUCLEOTIDE SEQUENCE [LARGE SCALE GENOMIC DNA]</scope>
    <source>
        <strain>K411</strain>
    </source>
</reference>
<accession>Q4JXC9</accession>
<gene>
    <name evidence="1" type="primary">mshD</name>
    <name type="ordered locus">jk0376</name>
</gene>
<protein>
    <recommendedName>
        <fullName evidence="1">Mycothiol acetyltransferase</fullName>
        <shortName evidence="1">MSH acetyltransferase</shortName>
        <ecNumber evidence="1">2.3.1.189</ecNumber>
    </recommendedName>
    <alternativeName>
        <fullName evidence="1">Mycothiol synthase</fullName>
    </alternativeName>
</protein>
<organism>
    <name type="scientific">Corynebacterium jeikeium (strain K411)</name>
    <dbReference type="NCBI Taxonomy" id="306537"/>
    <lineage>
        <taxon>Bacteria</taxon>
        <taxon>Bacillati</taxon>
        <taxon>Actinomycetota</taxon>
        <taxon>Actinomycetes</taxon>
        <taxon>Mycobacteriales</taxon>
        <taxon>Corynebacteriaceae</taxon>
        <taxon>Corynebacterium</taxon>
    </lineage>
</organism>